<evidence type="ECO:0000255" key="1"/>
<evidence type="ECO:0000269" key="2">
    <source>
    </source>
</evidence>
<evidence type="ECO:0000303" key="3">
    <source>
    </source>
</evidence>
<evidence type="ECO:0000305" key="4">
    <source>
    </source>
</evidence>
<evidence type="ECO:0000312" key="5">
    <source>
        <dbReference type="EMBL" id="EOP43921.1"/>
    </source>
</evidence>
<comment type="function">
    <text evidence="2 3">Effector protein of a CBASS antiviral system. CBASS (cyclic oligonucleotide-based antiphage signaling system) provides immunity against bacteriophage. The CD-NTase protein synthesizes cyclic nucleotides in response to infection; these serve as specific second messenger signals. The signals activate a diverse range of effectors, leading to bacterial cell death and thus abortive phage infection. A type I-B CBASS system (PubMed:32839535).</text>
</comment>
<comment type="function">
    <text evidence="2">Protects B.subtilis against phage infection. When IK1_05630 and IK1_05631 are introduced in B.subtilis BEST7003 there is 1000-fold protection against phage SBSphiC. Both genes are required for protection. Activation leads to bacterial cell lysis and death, which occurs before the phage has finished its replication cycle, thus protecting non-infected bacteria by aborting the phage infection and preventing its propagation.</text>
</comment>
<comment type="subcellular location">
    <subcellularLocation>
        <location evidence="1">Cell membrane</location>
        <topology evidence="1">Multi-pass membrane protein</topology>
    </subcellularLocation>
</comment>
<comment type="induction">
    <text evidence="4">Part of the CBASS operon consisting of cdnD-IK1_05631.</text>
</comment>
<organism>
    <name type="scientific">Bacillus cereus (strain VD146)</name>
    <dbReference type="NCBI Taxonomy" id="1053236"/>
    <lineage>
        <taxon>Bacteria</taxon>
        <taxon>Bacillati</taxon>
        <taxon>Bacillota</taxon>
        <taxon>Bacilli</taxon>
        <taxon>Bacillales</taxon>
        <taxon>Bacillaceae</taxon>
        <taxon>Bacillus</taxon>
        <taxon>Bacillus cereus group</taxon>
    </lineage>
</organism>
<protein>
    <recommendedName>
        <fullName evidence="4">Probable CBASS effector molecule IK1_05631</fullName>
    </recommendedName>
</protein>
<gene>
    <name evidence="5" type="ORF">IK1_05631</name>
</gene>
<proteinExistence type="inferred from homology"/>
<keyword id="KW-0051">Antiviral defense</keyword>
<keyword id="KW-1003">Cell membrane</keyword>
<keyword id="KW-0472">Membrane</keyword>
<keyword id="KW-0812">Transmembrane</keyword>
<keyword id="KW-1133">Transmembrane helix</keyword>
<sequence>MLEKQNSEENIELLRAMRYCYNKSKIFYAVRISISILIPILSISIYLFNRGSTGTSNTGVWFSVIGSIWLLIAYQIEKLEGGYIEKGAKIQEKFDINLFNIRWNNVLVGNQISPEDIRDFSSKFKGDEEKLKNWYGGLSSKHFYVNVILAQRSNLMWAISLKRNFSILLFTVSVLYLFLTIAFGFFVNMSMQEYIIKILLPSMSILIYGFKTSDELKKQSNKLEALGNSIISKFDTGNLSEINASACREYQDAIFVYNRIRSILIPEWLYWLRQQKDDEKMIQINIRLTKKSNLF</sequence>
<feature type="chain" id="PRO_0000451861" description="Probable CBASS effector molecule IK1_05631">
    <location>
        <begin position="1"/>
        <end position="295"/>
    </location>
</feature>
<feature type="transmembrane region" description="Helical" evidence="1">
    <location>
        <begin position="26"/>
        <end position="46"/>
    </location>
</feature>
<feature type="transmembrane region" description="Helical" evidence="1">
    <location>
        <begin position="56"/>
        <end position="76"/>
    </location>
</feature>
<feature type="transmembrane region" description="Helical" evidence="1">
    <location>
        <begin position="167"/>
        <end position="187"/>
    </location>
</feature>
<feature type="transmembrane region" description="Helical" evidence="1">
    <location>
        <begin position="190"/>
        <end position="210"/>
    </location>
</feature>
<name>Y5631_BACCX</name>
<reference key="1">
    <citation type="submission" date="2012-12" db="EMBL/GenBank/DDBJ databases">
        <title>The genome sequence of Bacillus cereus VD146.</title>
        <authorList>
            <consortium name="The Broad Institute Genome Sequencing Platform"/>
            <consortium name="The Broad Institute Genome Sequencing Center for Infectious Disease"/>
            <person name="Feldgarden M."/>
            <person name="Van der Auwera G.A."/>
            <person name="Mahillon J."/>
            <person name="Duprez V."/>
            <person name="Timmery S."/>
            <person name="Mattelet C."/>
            <person name="Dierick K."/>
            <person name="Sun M."/>
            <person name="Yu Z."/>
            <person name="Zhu L."/>
            <person name="Hu X."/>
            <person name="Shank E.B."/>
            <person name="Swiecicka I."/>
            <person name="Hansen B.M."/>
            <person name="Andrup L."/>
            <person name="Walker B."/>
            <person name="Young S.K."/>
            <person name="Zeng Q."/>
            <person name="Gargeya S."/>
            <person name="Fitzgerald M."/>
            <person name="Haas B."/>
            <person name="Abouelleil A."/>
            <person name="Alvarado L."/>
            <person name="Arachchi H.M."/>
            <person name="Berlin A.M."/>
            <person name="Chapman S.B."/>
            <person name="Dewar J."/>
            <person name="Goldberg J."/>
            <person name="Griggs A."/>
            <person name="Gujja S."/>
            <person name="Hansen M."/>
            <person name="Howarth C."/>
            <person name="Imamovic A."/>
            <person name="Larimer J."/>
            <person name="McCowan C."/>
            <person name="Murphy C."/>
            <person name="Neiman D."/>
            <person name="Pearson M."/>
            <person name="Priest M."/>
            <person name="Roberts A."/>
            <person name="Saif S."/>
            <person name="Shea T."/>
            <person name="Sisk P."/>
            <person name="Sykes S."/>
            <person name="Wortman J."/>
            <person name="Nusbaum C."/>
            <person name="Birren B."/>
        </authorList>
    </citation>
    <scope>NUCLEOTIDE SEQUENCE [LARGE SCALE GENOMIC DNA]</scope>
    <source>
        <strain>VD146</strain>
    </source>
</reference>
<reference key="2">
    <citation type="journal article" date="2019" name="Nature">
        <title>Cyclic GMP-AMP signalling protects bacteria against viral infection.</title>
        <authorList>
            <person name="Cohen D."/>
            <person name="Melamed S."/>
            <person name="Millman A."/>
            <person name="Shulman G."/>
            <person name="Oppenheimer-Shaanan Y."/>
            <person name="Kacen A."/>
            <person name="Doron S."/>
            <person name="Amitai G."/>
            <person name="Sorek R."/>
        </authorList>
    </citation>
    <scope>ANTIVIRAL DEFENSE</scope>
    <scope>NOMENCLATURE</scope>
    <scope>OPERON STRUCTURE</scope>
    <source>
        <strain>VD146</strain>
    </source>
</reference>
<reference key="3">
    <citation type="journal article" date="2020" name="Nat. Microbiol.">
        <title>Diversity and classification of cyclic-oligonucleotide-based anti-phage signalling systems.</title>
        <authorList>
            <person name="Millman A."/>
            <person name="Melamed S."/>
            <person name="Amitai G."/>
            <person name="Sorek R."/>
        </authorList>
    </citation>
    <scope>CLASSIFICATION AND NOMENCLATURE</scope>
</reference>
<accession>R8NBR0</accession>
<dbReference type="EMBL" id="KB976676">
    <property type="protein sequence ID" value="EOP43921.1"/>
    <property type="molecule type" value="Genomic_DNA"/>
</dbReference>
<dbReference type="RefSeq" id="WP_016119573.1">
    <property type="nucleotide sequence ID" value="NZ_KB976676.1"/>
</dbReference>
<dbReference type="PATRIC" id="fig|1053236.3.peg.1318"/>
<dbReference type="HOGENOM" id="CLU_077101_0_0_9"/>
<dbReference type="Proteomes" id="UP000014020">
    <property type="component" value="Unassembled WGS sequence"/>
</dbReference>
<dbReference type="GO" id="GO:0005886">
    <property type="term" value="C:plasma membrane"/>
    <property type="evidence" value="ECO:0007669"/>
    <property type="project" value="UniProtKB-SubCell"/>
</dbReference>
<dbReference type="GO" id="GO:0051607">
    <property type="term" value="P:defense response to virus"/>
    <property type="evidence" value="ECO:0007669"/>
    <property type="project" value="UniProtKB-KW"/>
</dbReference>
<dbReference type="InterPro" id="IPR049920">
    <property type="entry name" value="IK1_05631-like"/>
</dbReference>
<dbReference type="Pfam" id="PF18159">
    <property type="entry name" value="S_4TM"/>
    <property type="match status" value="1"/>
</dbReference>